<protein>
    <recommendedName>
        <fullName evidence="1">Proteasome subunit beta 2</fullName>
        <ecNumber evidence="1">3.4.25.1</ecNumber>
    </recommendedName>
    <alternativeName>
        <fullName evidence="1">20S proteasome beta subunit 2</fullName>
    </alternativeName>
    <alternativeName>
        <fullName evidence="1">Proteasome core protein PsmB 2</fullName>
    </alternativeName>
</protein>
<sequence length="196" mass="21236">MEELPSTAVGIRLQDGVILGAVRRLSYGGYVLSKSAKKVFPISRFGIGGAGLFGDLQALTRIMNANIKYYELYNNRPISTRAAAKLLSIILYQYKYMPFISEVLFGGVDNGEPQLYVLDPLGSLLDDIYAAVGSGARVAIGVLEAEYSEKLTLTQGRELTIKSLRASAERDVTSGDGIDILTISKDGKINTEFLSS</sequence>
<feature type="propeptide" id="PRO_0000397328" description="Removed in mature form; by autocatalysis" evidence="1">
    <location>
        <begin position="1"/>
        <end position="6"/>
    </location>
</feature>
<feature type="chain" id="PRO_0000397329" description="Proteasome subunit beta 2">
    <location>
        <begin position="7"/>
        <end position="196"/>
    </location>
</feature>
<feature type="active site" description="Nucleophile" evidence="1">
    <location>
        <position position="7"/>
    </location>
</feature>
<keyword id="KW-0068">Autocatalytic cleavage</keyword>
<keyword id="KW-0963">Cytoplasm</keyword>
<keyword id="KW-0378">Hydrolase</keyword>
<keyword id="KW-0645">Protease</keyword>
<keyword id="KW-0647">Proteasome</keyword>
<keyword id="KW-1185">Reference proteome</keyword>
<keyword id="KW-0888">Threonine protease</keyword>
<keyword id="KW-0865">Zymogen</keyword>
<reference key="1">
    <citation type="journal article" date="2008" name="Appl. Environ. Microbiol.">
        <title>The genome sequence of the metal-mobilizing, extremely thermoacidophilic archaeon Metallosphaera sedula provides insights into bioleaching-associated metabolism.</title>
        <authorList>
            <person name="Auernik K.S."/>
            <person name="Maezato Y."/>
            <person name="Blum P.H."/>
            <person name="Kelly R.M."/>
        </authorList>
    </citation>
    <scope>NUCLEOTIDE SEQUENCE [LARGE SCALE GENOMIC DNA]</scope>
    <source>
        <strain>ATCC 51363 / DSM 5348 / JCM 9185 / NBRC 15509 / TH2</strain>
    </source>
</reference>
<dbReference type="EC" id="3.4.25.1" evidence="1"/>
<dbReference type="EMBL" id="CP000682">
    <property type="protein sequence ID" value="ABP96406.1"/>
    <property type="molecule type" value="Genomic_DNA"/>
</dbReference>
<dbReference type="SMR" id="A4YJ04"/>
<dbReference type="STRING" id="399549.Msed_2268"/>
<dbReference type="MEROPS" id="T01.002"/>
<dbReference type="KEGG" id="mse:Msed_2268"/>
<dbReference type="eggNOG" id="arCOG00970">
    <property type="taxonomic scope" value="Archaea"/>
</dbReference>
<dbReference type="HOGENOM" id="CLU_035750_7_2_2"/>
<dbReference type="Proteomes" id="UP000000242">
    <property type="component" value="Chromosome"/>
</dbReference>
<dbReference type="GO" id="GO:0005737">
    <property type="term" value="C:cytoplasm"/>
    <property type="evidence" value="ECO:0007669"/>
    <property type="project" value="UniProtKB-SubCell"/>
</dbReference>
<dbReference type="GO" id="GO:0019774">
    <property type="term" value="C:proteasome core complex, beta-subunit complex"/>
    <property type="evidence" value="ECO:0007669"/>
    <property type="project" value="UniProtKB-UniRule"/>
</dbReference>
<dbReference type="GO" id="GO:0004298">
    <property type="term" value="F:threonine-type endopeptidase activity"/>
    <property type="evidence" value="ECO:0007669"/>
    <property type="project" value="UniProtKB-UniRule"/>
</dbReference>
<dbReference type="GO" id="GO:0010498">
    <property type="term" value="P:proteasomal protein catabolic process"/>
    <property type="evidence" value="ECO:0007669"/>
    <property type="project" value="UniProtKB-UniRule"/>
</dbReference>
<dbReference type="Gene3D" id="3.60.20.10">
    <property type="entry name" value="Glutamine Phosphoribosylpyrophosphate, subunit 1, domain 1"/>
    <property type="match status" value="1"/>
</dbReference>
<dbReference type="HAMAP" id="MF_02113_A">
    <property type="entry name" value="Proteasome_B_A"/>
    <property type="match status" value="1"/>
</dbReference>
<dbReference type="InterPro" id="IPR029055">
    <property type="entry name" value="Ntn_hydrolases_N"/>
</dbReference>
<dbReference type="InterPro" id="IPR019983">
    <property type="entry name" value="Pept_T1A_Psome_bsu_arc"/>
</dbReference>
<dbReference type="InterPro" id="IPR000243">
    <property type="entry name" value="Pept_T1A_subB"/>
</dbReference>
<dbReference type="InterPro" id="IPR001353">
    <property type="entry name" value="Proteasome_sua/b"/>
</dbReference>
<dbReference type="InterPro" id="IPR023333">
    <property type="entry name" value="Proteasome_suB-type"/>
</dbReference>
<dbReference type="NCBIfam" id="TIGR03634">
    <property type="entry name" value="arc_protsome_B"/>
    <property type="match status" value="1"/>
</dbReference>
<dbReference type="PANTHER" id="PTHR32194:SF0">
    <property type="entry name" value="ATP-DEPENDENT PROTEASE SUBUNIT HSLV"/>
    <property type="match status" value="1"/>
</dbReference>
<dbReference type="PANTHER" id="PTHR32194">
    <property type="entry name" value="METALLOPROTEASE TLDD"/>
    <property type="match status" value="1"/>
</dbReference>
<dbReference type="Pfam" id="PF00227">
    <property type="entry name" value="Proteasome"/>
    <property type="match status" value="1"/>
</dbReference>
<dbReference type="PRINTS" id="PR00141">
    <property type="entry name" value="PROTEASOME"/>
</dbReference>
<dbReference type="SUPFAM" id="SSF56235">
    <property type="entry name" value="N-terminal nucleophile aminohydrolases (Ntn hydrolases)"/>
    <property type="match status" value="1"/>
</dbReference>
<dbReference type="PROSITE" id="PS51476">
    <property type="entry name" value="PROTEASOME_BETA_2"/>
    <property type="match status" value="1"/>
</dbReference>
<organism>
    <name type="scientific">Metallosphaera sedula (strain ATCC 51363 / DSM 5348 / JCM 9185 / NBRC 15509 / TH2)</name>
    <dbReference type="NCBI Taxonomy" id="399549"/>
    <lineage>
        <taxon>Archaea</taxon>
        <taxon>Thermoproteota</taxon>
        <taxon>Thermoprotei</taxon>
        <taxon>Sulfolobales</taxon>
        <taxon>Sulfolobaceae</taxon>
        <taxon>Metallosphaera</taxon>
    </lineage>
</organism>
<comment type="function">
    <text evidence="1">Component of the proteasome core, a large protease complex with broad specificity involved in protein degradation.</text>
</comment>
<comment type="catalytic activity">
    <reaction evidence="1">
        <text>Cleavage of peptide bonds with very broad specificity.</text>
        <dbReference type="EC" id="3.4.25.1"/>
    </reaction>
</comment>
<comment type="activity regulation">
    <text evidence="1">The formation of the proteasomal ATPase PAN-20S proteasome complex, via the docking of the C-termini of PAN into the intersubunit pockets in the alpha-rings, triggers opening of the gate for substrate entry. Interconversion between the open-gate and close-gate conformations leads to a dynamic regulation of the 20S proteasome proteolysis activity.</text>
</comment>
<comment type="subunit">
    <text evidence="1">The 20S proteasome core is composed of 14 alpha and 14 beta subunits that assemble into four stacked heptameric rings, resulting in a barrel-shaped structure. The two inner rings, each composed of seven catalytic beta subunits, are sandwiched by two outer rings, each composed of seven alpha subunits. The catalytic chamber with the active sites is on the inside of the barrel. Has a gated structure, the ends of the cylinder being occluded by the N-termini of the alpha-subunits. Is capped at one or both ends by the proteasome regulatory ATPase, PAN.</text>
</comment>
<comment type="subcellular location">
    <subcellularLocation>
        <location evidence="1">Cytoplasm</location>
    </subcellularLocation>
</comment>
<comment type="similarity">
    <text evidence="1">Belongs to the peptidase T1B family.</text>
</comment>
<name>PSB2_METS5</name>
<evidence type="ECO:0000255" key="1">
    <source>
        <dbReference type="HAMAP-Rule" id="MF_02113"/>
    </source>
</evidence>
<accession>A4YJ04</accession>
<gene>
    <name evidence="1" type="primary">psmB2</name>
    <name type="ordered locus">Msed_2268</name>
</gene>
<proteinExistence type="inferred from homology"/>